<reference key="1">
    <citation type="journal article" date="2001" name="Lancet">
        <title>Whole genome sequencing of meticillin-resistant Staphylococcus aureus.</title>
        <authorList>
            <person name="Kuroda M."/>
            <person name="Ohta T."/>
            <person name="Uchiyama I."/>
            <person name="Baba T."/>
            <person name="Yuzawa H."/>
            <person name="Kobayashi I."/>
            <person name="Cui L."/>
            <person name="Oguchi A."/>
            <person name="Aoki K."/>
            <person name="Nagai Y."/>
            <person name="Lian J.-Q."/>
            <person name="Ito T."/>
            <person name="Kanamori M."/>
            <person name="Matsumaru H."/>
            <person name="Maruyama A."/>
            <person name="Murakami H."/>
            <person name="Hosoyama A."/>
            <person name="Mizutani-Ui Y."/>
            <person name="Takahashi N.K."/>
            <person name="Sawano T."/>
            <person name="Inoue R."/>
            <person name="Kaito C."/>
            <person name="Sekimizu K."/>
            <person name="Hirakawa H."/>
            <person name="Kuhara S."/>
            <person name="Goto S."/>
            <person name="Yabuzaki J."/>
            <person name="Kanehisa M."/>
            <person name="Yamashita A."/>
            <person name="Oshima K."/>
            <person name="Furuya K."/>
            <person name="Yoshino C."/>
            <person name="Shiba T."/>
            <person name="Hattori M."/>
            <person name="Ogasawara N."/>
            <person name="Hayashi H."/>
            <person name="Hiramatsu K."/>
        </authorList>
    </citation>
    <scope>NUCLEOTIDE SEQUENCE [LARGE SCALE GENOMIC DNA]</scope>
    <source>
        <strain>Mu50 / ATCC 700699</strain>
    </source>
</reference>
<dbReference type="EMBL" id="BA000017">
    <property type="protein sequence ID" value="BAB58455.1"/>
    <property type="molecule type" value="Genomic_DNA"/>
</dbReference>
<dbReference type="RefSeq" id="WP_000002973.1">
    <property type="nucleotide sequence ID" value="NC_002758.2"/>
</dbReference>
<dbReference type="SMR" id="Q99RX9"/>
<dbReference type="KEGG" id="sav:SAV2293"/>
<dbReference type="HOGENOM" id="CLU_072144_1_0_9"/>
<dbReference type="PhylomeDB" id="Q99RX9"/>
<dbReference type="Proteomes" id="UP000002481">
    <property type="component" value="Chromosome"/>
</dbReference>
<dbReference type="GO" id="GO:0005737">
    <property type="term" value="C:cytoplasm"/>
    <property type="evidence" value="ECO:0007669"/>
    <property type="project" value="UniProtKB-SubCell"/>
</dbReference>
<dbReference type="GO" id="GO:0005525">
    <property type="term" value="F:GTP binding"/>
    <property type="evidence" value="ECO:0007669"/>
    <property type="project" value="UniProtKB-KW"/>
</dbReference>
<dbReference type="GO" id="GO:0003924">
    <property type="term" value="F:GTPase activity"/>
    <property type="evidence" value="ECO:0007669"/>
    <property type="project" value="InterPro"/>
</dbReference>
<dbReference type="GO" id="GO:0016151">
    <property type="term" value="F:nickel cation binding"/>
    <property type="evidence" value="ECO:0007669"/>
    <property type="project" value="UniProtKB-UniRule"/>
</dbReference>
<dbReference type="GO" id="GO:0043419">
    <property type="term" value="P:urea catabolic process"/>
    <property type="evidence" value="ECO:0007669"/>
    <property type="project" value="InterPro"/>
</dbReference>
<dbReference type="CDD" id="cd05540">
    <property type="entry name" value="UreG"/>
    <property type="match status" value="1"/>
</dbReference>
<dbReference type="Gene3D" id="3.40.50.300">
    <property type="entry name" value="P-loop containing nucleotide triphosphate hydrolases"/>
    <property type="match status" value="1"/>
</dbReference>
<dbReference type="HAMAP" id="MF_01389">
    <property type="entry name" value="UreG"/>
    <property type="match status" value="1"/>
</dbReference>
<dbReference type="InterPro" id="IPR003495">
    <property type="entry name" value="CobW/HypB/UreG_nucleotide-bd"/>
</dbReference>
<dbReference type="InterPro" id="IPR027417">
    <property type="entry name" value="P-loop_NTPase"/>
</dbReference>
<dbReference type="InterPro" id="IPR004400">
    <property type="entry name" value="UreG"/>
</dbReference>
<dbReference type="NCBIfam" id="TIGR00101">
    <property type="entry name" value="ureG"/>
    <property type="match status" value="1"/>
</dbReference>
<dbReference type="PANTHER" id="PTHR31715">
    <property type="entry name" value="UREASE ACCESSORY PROTEIN G"/>
    <property type="match status" value="1"/>
</dbReference>
<dbReference type="PANTHER" id="PTHR31715:SF0">
    <property type="entry name" value="UREASE ACCESSORY PROTEIN G"/>
    <property type="match status" value="1"/>
</dbReference>
<dbReference type="Pfam" id="PF02492">
    <property type="entry name" value="cobW"/>
    <property type="match status" value="1"/>
</dbReference>
<dbReference type="PIRSF" id="PIRSF005624">
    <property type="entry name" value="Ni-bind_GTPase"/>
    <property type="match status" value="1"/>
</dbReference>
<dbReference type="SUPFAM" id="SSF52540">
    <property type="entry name" value="P-loop containing nucleoside triphosphate hydrolases"/>
    <property type="match status" value="1"/>
</dbReference>
<gene>
    <name evidence="1" type="primary">ureG</name>
    <name type="ordered locus">SAV2293</name>
</gene>
<sequence>MANPIKIGIGGPVGAGKTQLIEKVVKRLSKEMSIGVITNDIYTKEDEKILVNSGVLPESRIIGVETGGCPHTAIREDASMNFAAIDELLERHDDIELIFIESGGDNLAATFSPELVDFSIYIIDVAQGEKIPRKGGQGMIKSDFFVINKTDLAPYVGASLEQMAEDTKVFRGKRPFTFTNLKTDEGLDEVIDWIERDTLLKGLS</sequence>
<protein>
    <recommendedName>
        <fullName evidence="1">Urease accessory protein UreG</fullName>
    </recommendedName>
</protein>
<keyword id="KW-0143">Chaperone</keyword>
<keyword id="KW-0963">Cytoplasm</keyword>
<keyword id="KW-0342">GTP-binding</keyword>
<keyword id="KW-0996">Nickel insertion</keyword>
<keyword id="KW-0547">Nucleotide-binding</keyword>
<name>UREG_STAAM</name>
<proteinExistence type="inferred from homology"/>
<accession>Q99RX9</accession>
<feature type="chain" id="PRO_1000145230" description="Urease accessory protein UreG">
    <location>
        <begin position="1"/>
        <end position="204"/>
    </location>
</feature>
<feature type="binding site" evidence="1">
    <location>
        <begin position="11"/>
        <end position="18"/>
    </location>
    <ligand>
        <name>GTP</name>
        <dbReference type="ChEBI" id="CHEBI:37565"/>
    </ligand>
</feature>
<comment type="function">
    <text evidence="1">Facilitates the functional incorporation of the urease nickel metallocenter. This process requires GTP hydrolysis, probably effectuated by UreG.</text>
</comment>
<comment type="subunit">
    <text evidence="1">Homodimer. UreD, UreF and UreG form a complex that acts as a GTP-hydrolysis-dependent molecular chaperone, activating the urease apoprotein by helping to assemble the nickel containing metallocenter of UreC. The UreE protein probably delivers the nickel.</text>
</comment>
<comment type="subcellular location">
    <subcellularLocation>
        <location evidence="1">Cytoplasm</location>
    </subcellularLocation>
</comment>
<comment type="similarity">
    <text evidence="1">Belongs to the SIMIBI class G3E GTPase family. UreG subfamily.</text>
</comment>
<organism>
    <name type="scientific">Staphylococcus aureus (strain Mu50 / ATCC 700699)</name>
    <dbReference type="NCBI Taxonomy" id="158878"/>
    <lineage>
        <taxon>Bacteria</taxon>
        <taxon>Bacillati</taxon>
        <taxon>Bacillota</taxon>
        <taxon>Bacilli</taxon>
        <taxon>Bacillales</taxon>
        <taxon>Staphylococcaceae</taxon>
        <taxon>Staphylococcus</taxon>
    </lineage>
</organism>
<evidence type="ECO:0000255" key="1">
    <source>
        <dbReference type="HAMAP-Rule" id="MF_01389"/>
    </source>
</evidence>